<name>RGYR_PYRHO</name>
<comment type="function">
    <text evidence="1">Modifies the topological state of DNA by introducing positive supercoils in an ATP-dependent process, increasing the linking number in steps of +1. Binds to single-stranded DNA, transiently cleaves and then rejoins the ends, introducing a positive supercoil in the process. The scissile phosphodiester is attacked by the catalytic tyrosine of the enzyme, resulting in the formation of a DNA-(5'-phosphotyrosyl)-enzyme intermediate. Probably involved in rewinding DNA strands in regions of the chromosome that have opened up to allow replication, transcription, DNA repair and/or for DNA protection.</text>
</comment>
<comment type="catalytic activity">
    <reaction evidence="1">
        <text>ATP + H2O = ADP + phosphate + H(+)</text>
        <dbReference type="Rhea" id="RHEA:13065"/>
        <dbReference type="ChEBI" id="CHEBI:15377"/>
        <dbReference type="ChEBI" id="CHEBI:15378"/>
        <dbReference type="ChEBI" id="CHEBI:30616"/>
        <dbReference type="ChEBI" id="CHEBI:43474"/>
        <dbReference type="ChEBI" id="CHEBI:456216"/>
    </reaction>
</comment>
<comment type="cofactor">
    <cofactor evidence="1">
        <name>Zn(2+)</name>
        <dbReference type="ChEBI" id="CHEBI:29105"/>
    </cofactor>
    <text evidence="1">Binds 2 zinc ions per subunit.</text>
</comment>
<comment type="cofactor">
    <cofactor evidence="1">
        <name>Mg(2+)</name>
        <dbReference type="ChEBI" id="CHEBI:18420"/>
    </cofactor>
</comment>
<comment type="subunit">
    <text evidence="1">Monomer.</text>
</comment>
<comment type="subcellular location">
    <subcellularLocation>
        <location evidence="1">Cytoplasm</location>
    </subcellularLocation>
</comment>
<comment type="domain">
    <text evidence="1">Introduction of positive supercoils requires the cooperation of both domains. The helicase-like domain probably does not directly unwind DNA, but more likely acts by driving ATP-dependent conformational changes within the whole enzyme. A beta hairpin in the 'latch' region of the N-terminal domain plays a regulatory role in the enzyme, repressing topoisomerase activity in the absence of ATP and preventing the enzyme from acting as an ATP-independent relaxing enzyme; it also helps to coordinate nucleotide hydrolysis by the ATPase domain with the supercoiling activity of the topoisomerase domain.</text>
</comment>
<comment type="PTM">
    <text evidence="5">This protein undergoes a protein self splicing that involves a post-translational excision of the intervening region (intein) followed by peptide ligation.</text>
</comment>
<comment type="miscellaneous">
    <text evidence="1">This enzyme is the only unique feature of hyperthermophilic bacteria/archaea known and seems to be essential for adaptation to life at high temperatures. It may play a role in stabilization of DNA at high temperatures.</text>
</comment>
<comment type="similarity">
    <text evidence="1 5">In the N-terminal section; belongs to the DEAD box helicase family. DDVD subfamily.</text>
</comment>
<comment type="similarity">
    <text evidence="1">In the C-terminal section; belongs to the type IA topoisomerase family.</text>
</comment>
<protein>
    <recommendedName>
        <fullName evidence="1">Reverse gyrase</fullName>
        <ecNumber evidence="1">5.6.2.-</ecNumber>
    </recommendedName>
    <component>
        <recommendedName>
            <fullName>Pho r-Gyr intein</fullName>
        </recommendedName>
    </component>
</protein>
<keyword id="KW-0067">ATP-binding</keyword>
<keyword id="KW-0068">Autocatalytic cleavage</keyword>
<keyword id="KW-0963">Cytoplasm</keyword>
<keyword id="KW-0238">DNA-binding</keyword>
<keyword id="KW-0413">Isomerase</keyword>
<keyword id="KW-0460">Magnesium</keyword>
<keyword id="KW-0479">Metal-binding</keyword>
<keyword id="KW-0547">Nucleotide-binding</keyword>
<keyword id="KW-0651">Protein splicing</keyword>
<keyword id="KW-0677">Repeat</keyword>
<keyword id="KW-0799">Topoisomerase</keyword>
<keyword id="KW-0862">Zinc</keyword>
<keyword id="KW-0863">Zinc-finger</keyword>
<sequence length="1624" mass="187069">MKAIYRGMCPNCRGAITDERLSNKNPCEGCLSEPILSEDYNELIVAVRNALKLRGTLKDWEELYRLNKEVSEIEELFEKSTGFKFWSAQRTWVKRIIRGKSFSIIAPTGMGKSTFGAFISIYFATKGKKSYIVVPTTPLVIQTVKKIESMLEKANVSVRLVYYHGNLRKKEKEEALEKIRNGDFDILITSSQFLATRFKELLKDKKFDLIFVDDVDAFLKASKNIDRSLIMLGFSEEIIGRAWEVIKLKKQLAKLLQNEKKNEEEIEKLNKEIEKIEDEIEEYKRRNKIGILIVASATGSAKGDRIKLYRELLGFEVGSGRSVLRNIVDTYLLPEKPIEEHVVELLRKLGKGGLIFVPIDKGIEYAEELTDYLKSQGFKVELVSAKNKKGLELFEKGEIDYLVGVATYYGTLVRGLDLPHLIRFAIFTGVPKFRFSMDLEQPTIYRVLGLMSEILEFLPEEKKSEGEKLYARLRRLIRNIPQYELMKIEEALAEGLELEGFHNHVLEVFKQSVEFLREVLKDEEVIKKIAENPFLSLKEIEGKLYIEIPDVRTYIQASGRTSRLFAGGITKGLSVIIVDDQKVFNGLIRQMRWRFVEFDIKKFEEVNLKEVLKEIDRDREKVKLVIEGKISEQVKDLVKSALMIVESPNKARTIASFFGQPSKRKIGDLTAYEVSIGDKMLTILASGGHMFDLVTNEGYHGVLILKNNGKPYFVPVYDTIKRCRDCGHQFVDWEQKGVCPRCGSRNVHDALENVKAMRELALEVDEILIGTDPDTEGEKIAWDIRNVLAPYAPNIKRIEFHEVTRPAILRAIREARDINEDRVNAQLVRRIEDRWIGFELSQKLWEVFENRNLSAGRVQTPVLGWIVQRYKEFTESETDFLGIILENGINVTIENAKGEVREVEVKDVIIEEKDVNPLPPYTTDTMLQDASRFLGFSATKTMQLAQDLFEAGLCVTPDTLVSLSDGRIIEIREAVENSEESLLGINGLKPKEAKALKFWEIDWDGPIKVIKLKNGHEIKATPDHGLLVMRDGKIGWVSAKNIREGDYVAFIYNLGHRGGKKYTLPQLLKELGISEYENSSSQELNNREQEMDSKQISIELDERFWYIFGVILGKGTLKGDKVVIFQKDVKPVIEEALPFVRIFESADHIGFSHLILAEVFRRLGVGEGKLHSLVFGLREEYINAMIAGYFDASGTFLRRAVLTSKRGDILRMLSVYLYQIGIVNNLRRDEHAGVWELIISDLEKFREKIYPYLRIKKSQFDKVYSISKNEGDFLPVASIFRKLKFRDGFKNRILDEEIPRDEVAKVLEYAEDSPEKEFLNSLVEARVTWVRVEKIEERHYTGKLYDFTTTTENFISNGIVSHNCTYHRTDSIHVSNTGIEVAKEYITQEIGEEYFTPRKWGEEGAHEAIRPTRPIDTGRLIQLIRDGIITIPKNLTRDHFRLYDLIFRRFMASQMKPAKILYEKAIISTPFKDVEVEGYIDVLYDGWSKIKSLPLRQIPKLEKGQRLRVKEVKQWRAPKVSLYTQGDVIALMKERGIGRPSTYAKIVQTLLQRGYVIETKGKKKLVPTEKGIKVYQYLITKYKDLVSEERTRQLEKIMDMVEEAKADYQDVLNELYEEIKRYVR</sequence>
<accession>O58530</accession>
<reference key="1">
    <citation type="journal article" date="1998" name="DNA Res.">
        <title>Complete sequence and gene organization of the genome of a hyper-thermophilic archaebacterium, Pyrococcus horikoshii OT3.</title>
        <authorList>
            <person name="Kawarabayasi Y."/>
            <person name="Sawada M."/>
            <person name="Horikawa H."/>
            <person name="Haikawa Y."/>
            <person name="Hino Y."/>
            <person name="Yamamoto S."/>
            <person name="Sekine M."/>
            <person name="Baba S."/>
            <person name="Kosugi H."/>
            <person name="Hosoyama A."/>
            <person name="Nagai Y."/>
            <person name="Sakai M."/>
            <person name="Ogura K."/>
            <person name="Otsuka R."/>
            <person name="Nakazawa H."/>
            <person name="Takamiya M."/>
            <person name="Ohfuku Y."/>
            <person name="Funahashi T."/>
            <person name="Tanaka T."/>
            <person name="Kudoh Y."/>
            <person name="Yamazaki J."/>
            <person name="Kushida N."/>
            <person name="Oguchi A."/>
            <person name="Aoki K."/>
            <person name="Yoshizawa T."/>
            <person name="Nakamura Y."/>
            <person name="Robb F.T."/>
            <person name="Horikoshi K."/>
            <person name="Masuchi Y."/>
            <person name="Shizuya H."/>
            <person name="Kikuchi H."/>
        </authorList>
    </citation>
    <scope>NUCLEOTIDE SEQUENCE [LARGE SCALE GENOMIC DNA]</scope>
    <source>
        <strain>ATCC 700860 / DSM 12428 / JCM 9974 / NBRC 100139 / OT-3</strain>
    </source>
</reference>
<gene>
    <name evidence="1" type="primary">rgy</name>
    <name type="ordered locus">PH0800</name>
</gene>
<dbReference type="EC" id="5.6.2.-" evidence="1"/>
<dbReference type="EMBL" id="BA000001">
    <property type="protein sequence ID" value="BAA29893.1"/>
    <property type="molecule type" value="Genomic_DNA"/>
</dbReference>
<dbReference type="PIR" id="C71129">
    <property type="entry name" value="C71129"/>
</dbReference>
<dbReference type="RefSeq" id="WP_010884895.1">
    <property type="nucleotide sequence ID" value="NC_000961.1"/>
</dbReference>
<dbReference type="SMR" id="O58530"/>
<dbReference type="STRING" id="70601.gene:9377750"/>
<dbReference type="EnsemblBacteria" id="BAA29893">
    <property type="protein sequence ID" value="BAA29893"/>
    <property type="gene ID" value="BAA29893"/>
</dbReference>
<dbReference type="GeneID" id="1443130"/>
<dbReference type="KEGG" id="pho:PH0800"/>
<dbReference type="eggNOG" id="arCOG01526">
    <property type="taxonomic scope" value="Archaea"/>
</dbReference>
<dbReference type="eggNOG" id="arCOG03151">
    <property type="taxonomic scope" value="Archaea"/>
</dbReference>
<dbReference type="OrthoDB" id="30963at2157"/>
<dbReference type="Proteomes" id="UP000000752">
    <property type="component" value="Chromosome"/>
</dbReference>
<dbReference type="GO" id="GO:0005737">
    <property type="term" value="C:cytoplasm"/>
    <property type="evidence" value="ECO:0007669"/>
    <property type="project" value="UniProtKB-SubCell"/>
</dbReference>
<dbReference type="GO" id="GO:0005524">
    <property type="term" value="F:ATP binding"/>
    <property type="evidence" value="ECO:0007669"/>
    <property type="project" value="UniProtKB-UniRule"/>
</dbReference>
<dbReference type="GO" id="GO:0016887">
    <property type="term" value="F:ATP hydrolysis activity"/>
    <property type="evidence" value="ECO:0007669"/>
    <property type="project" value="InterPro"/>
</dbReference>
<dbReference type="GO" id="GO:0003677">
    <property type="term" value="F:DNA binding"/>
    <property type="evidence" value="ECO:0007669"/>
    <property type="project" value="UniProtKB-UniRule"/>
</dbReference>
<dbReference type="GO" id="GO:0003918">
    <property type="term" value="F:DNA topoisomerase type II (double strand cut, ATP-hydrolyzing) activity"/>
    <property type="evidence" value="ECO:0007669"/>
    <property type="project" value="UniProtKB-EC"/>
</dbReference>
<dbReference type="GO" id="GO:0004519">
    <property type="term" value="F:endonuclease activity"/>
    <property type="evidence" value="ECO:0007669"/>
    <property type="project" value="InterPro"/>
</dbReference>
<dbReference type="GO" id="GO:0160097">
    <property type="term" value="F:reverse gyrase activity"/>
    <property type="evidence" value="ECO:0007669"/>
    <property type="project" value="UniProtKB-UniRule"/>
</dbReference>
<dbReference type="GO" id="GO:0008270">
    <property type="term" value="F:zinc ion binding"/>
    <property type="evidence" value="ECO:0007669"/>
    <property type="project" value="UniProtKB-UniRule"/>
</dbReference>
<dbReference type="GO" id="GO:0006265">
    <property type="term" value="P:DNA topological change"/>
    <property type="evidence" value="ECO:0007669"/>
    <property type="project" value="UniProtKB-UniRule"/>
</dbReference>
<dbReference type="GO" id="GO:0016539">
    <property type="term" value="P:intein-mediated protein splicing"/>
    <property type="evidence" value="ECO:0007669"/>
    <property type="project" value="InterPro"/>
</dbReference>
<dbReference type="CDD" id="cd17924">
    <property type="entry name" value="DDXDc_reverse_gyrase"/>
    <property type="match status" value="1"/>
</dbReference>
<dbReference type="CDD" id="cd00081">
    <property type="entry name" value="Hint"/>
    <property type="match status" value="2"/>
</dbReference>
<dbReference type="CDD" id="cd18798">
    <property type="entry name" value="SF2_C_reverse_gyrase"/>
    <property type="match status" value="1"/>
</dbReference>
<dbReference type="CDD" id="cd00186">
    <property type="entry name" value="TOP1Ac"/>
    <property type="match status" value="1"/>
</dbReference>
<dbReference type="CDD" id="cd03361">
    <property type="entry name" value="TOPRIM_TopoIA_RevGyr"/>
    <property type="match status" value="1"/>
</dbReference>
<dbReference type="Gene3D" id="3.40.50.140">
    <property type="match status" value="1"/>
</dbReference>
<dbReference type="Gene3D" id="2.170.16.10">
    <property type="entry name" value="Hedgehog/Intein (Hint) domain"/>
    <property type="match status" value="1"/>
</dbReference>
<dbReference type="Gene3D" id="3.10.28.10">
    <property type="entry name" value="Homing endonucleases"/>
    <property type="match status" value="1"/>
</dbReference>
<dbReference type="Gene3D" id="3.40.50.300">
    <property type="entry name" value="P-loop containing nucleotide triphosphate hydrolases"/>
    <property type="match status" value="3"/>
</dbReference>
<dbReference type="Gene3D" id="1.10.460.10">
    <property type="entry name" value="Topoisomerase I, domain 2"/>
    <property type="match status" value="2"/>
</dbReference>
<dbReference type="Gene3D" id="2.70.20.10">
    <property type="entry name" value="Topoisomerase I, domain 3"/>
    <property type="match status" value="1"/>
</dbReference>
<dbReference type="Gene3D" id="1.10.290.10">
    <property type="entry name" value="Topoisomerase I, domain 4"/>
    <property type="match status" value="1"/>
</dbReference>
<dbReference type="HAMAP" id="MF_01125">
    <property type="entry name" value="Reverse_gyrase"/>
    <property type="match status" value="1"/>
</dbReference>
<dbReference type="InterPro" id="IPR003593">
    <property type="entry name" value="AAA+_ATPase"/>
</dbReference>
<dbReference type="InterPro" id="IPR011545">
    <property type="entry name" value="DEAD/DEAH_box_helicase_dom"/>
</dbReference>
<dbReference type="InterPro" id="IPR014001">
    <property type="entry name" value="Helicase_ATP-bd"/>
</dbReference>
<dbReference type="InterPro" id="IPR003586">
    <property type="entry name" value="Hint_dom_C"/>
</dbReference>
<dbReference type="InterPro" id="IPR003587">
    <property type="entry name" value="Hint_dom_N"/>
</dbReference>
<dbReference type="InterPro" id="IPR036844">
    <property type="entry name" value="Hint_dom_sf"/>
</dbReference>
<dbReference type="InterPro" id="IPR027434">
    <property type="entry name" value="Homing_endonucl"/>
</dbReference>
<dbReference type="InterPro" id="IPR030934">
    <property type="entry name" value="Intein_C"/>
</dbReference>
<dbReference type="InterPro" id="IPR004042">
    <property type="entry name" value="Intein_endonuc_central"/>
</dbReference>
<dbReference type="InterPro" id="IPR006141">
    <property type="entry name" value="Intein_N"/>
</dbReference>
<dbReference type="InterPro" id="IPR004860">
    <property type="entry name" value="LAGLIDADG_dom"/>
</dbReference>
<dbReference type="InterPro" id="IPR027417">
    <property type="entry name" value="P-loop_NTPase"/>
</dbReference>
<dbReference type="InterPro" id="IPR005736">
    <property type="entry name" value="Reverse_gyrase"/>
</dbReference>
<dbReference type="InterPro" id="IPR003601">
    <property type="entry name" value="Topo_IA_2"/>
</dbReference>
<dbReference type="InterPro" id="IPR013497">
    <property type="entry name" value="Topo_IA_cen"/>
</dbReference>
<dbReference type="InterPro" id="IPR013824">
    <property type="entry name" value="Topo_IA_cen_sub1"/>
</dbReference>
<dbReference type="InterPro" id="IPR013825">
    <property type="entry name" value="Topo_IA_cen_sub2"/>
</dbReference>
<dbReference type="InterPro" id="IPR013826">
    <property type="entry name" value="Topo_IA_cen_sub3"/>
</dbReference>
<dbReference type="InterPro" id="IPR023405">
    <property type="entry name" value="Topo_IA_core_domain"/>
</dbReference>
<dbReference type="InterPro" id="IPR003602">
    <property type="entry name" value="Topo_IA_DNA-bd_dom"/>
</dbReference>
<dbReference type="InterPro" id="IPR006171">
    <property type="entry name" value="TOPRIM_dom"/>
</dbReference>
<dbReference type="InterPro" id="IPR034142">
    <property type="entry name" value="TOPRIM_RevGyr"/>
</dbReference>
<dbReference type="InterPro" id="IPR040569">
    <property type="entry name" value="Znf_Rg"/>
</dbReference>
<dbReference type="NCBIfam" id="TIGR01443">
    <property type="entry name" value="intein_Cterm"/>
    <property type="match status" value="1"/>
</dbReference>
<dbReference type="NCBIfam" id="TIGR01445">
    <property type="entry name" value="intein_Nterm"/>
    <property type="match status" value="1"/>
</dbReference>
<dbReference type="NCBIfam" id="TIGR01054">
    <property type="entry name" value="rgy"/>
    <property type="match status" value="1"/>
</dbReference>
<dbReference type="PANTHER" id="PTHR43505">
    <property type="entry name" value="REVERSE GYRASE"/>
    <property type="match status" value="1"/>
</dbReference>
<dbReference type="PANTHER" id="PTHR43505:SF1">
    <property type="entry name" value="REVERSE GYRASE"/>
    <property type="match status" value="1"/>
</dbReference>
<dbReference type="Pfam" id="PF00270">
    <property type="entry name" value="DEAD"/>
    <property type="match status" value="1"/>
</dbReference>
<dbReference type="Pfam" id="PF14890">
    <property type="entry name" value="Intein_splicing"/>
    <property type="match status" value="1"/>
</dbReference>
<dbReference type="Pfam" id="PF14528">
    <property type="entry name" value="LAGLIDADG_3"/>
    <property type="match status" value="1"/>
</dbReference>
<dbReference type="Pfam" id="PF01131">
    <property type="entry name" value="Topoisom_bac"/>
    <property type="match status" value="2"/>
</dbReference>
<dbReference type="Pfam" id="PF01751">
    <property type="entry name" value="Toprim"/>
    <property type="match status" value="1"/>
</dbReference>
<dbReference type="Pfam" id="PF17915">
    <property type="entry name" value="zf_Rg"/>
    <property type="match status" value="1"/>
</dbReference>
<dbReference type="PRINTS" id="PR00417">
    <property type="entry name" value="PRTPISMRASEI"/>
</dbReference>
<dbReference type="SMART" id="SM00382">
    <property type="entry name" value="AAA"/>
    <property type="match status" value="1"/>
</dbReference>
<dbReference type="SMART" id="SM00487">
    <property type="entry name" value="DEXDc"/>
    <property type="match status" value="1"/>
</dbReference>
<dbReference type="SMART" id="SM00305">
    <property type="entry name" value="HintC"/>
    <property type="match status" value="1"/>
</dbReference>
<dbReference type="SMART" id="SM00306">
    <property type="entry name" value="HintN"/>
    <property type="match status" value="1"/>
</dbReference>
<dbReference type="SMART" id="SM00437">
    <property type="entry name" value="TOP1Ac"/>
    <property type="match status" value="1"/>
</dbReference>
<dbReference type="SMART" id="SM00436">
    <property type="entry name" value="TOP1Bc"/>
    <property type="match status" value="1"/>
</dbReference>
<dbReference type="SMART" id="SM00493">
    <property type="entry name" value="TOPRIM"/>
    <property type="match status" value="1"/>
</dbReference>
<dbReference type="SUPFAM" id="SSF51294">
    <property type="entry name" value="Hedgehog/intein (Hint) domain"/>
    <property type="match status" value="1"/>
</dbReference>
<dbReference type="SUPFAM" id="SSF55608">
    <property type="entry name" value="Homing endonucleases"/>
    <property type="match status" value="1"/>
</dbReference>
<dbReference type="SUPFAM" id="SSF52540">
    <property type="entry name" value="P-loop containing nucleoside triphosphate hydrolases"/>
    <property type="match status" value="2"/>
</dbReference>
<dbReference type="SUPFAM" id="SSF56712">
    <property type="entry name" value="Prokaryotic type I DNA topoisomerase"/>
    <property type="match status" value="2"/>
</dbReference>
<dbReference type="PROSITE" id="PS51192">
    <property type="entry name" value="HELICASE_ATP_BIND_1"/>
    <property type="match status" value="1"/>
</dbReference>
<dbReference type="PROSITE" id="PS50818">
    <property type="entry name" value="INTEIN_C_TER"/>
    <property type="match status" value="1"/>
</dbReference>
<dbReference type="PROSITE" id="PS50819">
    <property type="entry name" value="INTEIN_ENDONUCLEASE"/>
    <property type="match status" value="1"/>
</dbReference>
<dbReference type="PROSITE" id="PS50817">
    <property type="entry name" value="INTEIN_N_TER"/>
    <property type="match status" value="1"/>
</dbReference>
<dbReference type="PROSITE" id="PS52039">
    <property type="entry name" value="TOPO_IA_2"/>
    <property type="match status" value="1"/>
</dbReference>
<dbReference type="PROSITE" id="PS50880">
    <property type="entry name" value="TOPRIM"/>
    <property type="match status" value="1"/>
</dbReference>
<dbReference type="PROSITE" id="PS52037">
    <property type="entry name" value="ZF_RG_C"/>
    <property type="match status" value="1"/>
</dbReference>
<dbReference type="PROSITE" id="PS52036">
    <property type="entry name" value="ZF_RG_N"/>
    <property type="match status" value="1"/>
</dbReference>
<proteinExistence type="inferred from homology"/>
<feature type="chain" id="PRO_0000459348" description="Reverse gyrase">
    <location>
        <begin position="1"/>
        <end position="1624"/>
    </location>
</feature>
<feature type="chain" id="PRO_0000030356" description="Reverse gyrase, 1st part">
    <location>
        <begin position="1"/>
        <end position="953"/>
    </location>
</feature>
<feature type="chain" id="PRO_0000030357" description="Pho r-Gyr intein">
    <location>
        <begin position="954"/>
        <end position="1363"/>
    </location>
</feature>
<feature type="chain" id="PRO_0000030358" description="Reverse gyrase, 2nd part">
    <location>
        <begin position="1364"/>
        <end position="1624"/>
    </location>
</feature>
<feature type="domain" description="Helicase ATP-binding" evidence="1">
    <location>
        <begin position="93"/>
        <end position="256"/>
    </location>
</feature>
<feature type="domain" description="Toprim" evidence="1">
    <location>
        <begin position="640"/>
        <end position="803"/>
    </location>
</feature>
<feature type="domain" description="Topo IA-type catalytic" evidence="4">
    <location>
        <begin position="819"/>
        <end position="1623"/>
    </location>
</feature>
<feature type="domain" description="DOD-type homing endonuclease">
    <location>
        <begin position="1107"/>
        <end position="1222"/>
    </location>
</feature>
<feature type="zinc finger region" description="RG N-terminal-type" evidence="2">
    <location>
        <begin position="1"/>
        <end position="42"/>
    </location>
</feature>
<feature type="zinc finger region" description="RG C-terminal-type" evidence="3">
    <location>
        <begin position="720"/>
        <end position="749"/>
    </location>
</feature>
<feature type="region of interest" description="Topoisomerase I" evidence="1">
    <location>
        <begin position="636"/>
        <end position="1624"/>
    </location>
</feature>
<feature type="short sequence motif" description="DEAD box" evidence="1">
    <location>
        <begin position="213"/>
        <end position="216"/>
    </location>
</feature>
<feature type="active site" description="O-(5'-phospho-DNA)-tyrosine intermediate" evidence="4">
    <location>
        <position position="1366"/>
    </location>
</feature>
<feature type="binding site" evidence="1">
    <location>
        <position position="9"/>
    </location>
    <ligand>
        <name>Zn(2+)</name>
        <dbReference type="ChEBI" id="CHEBI:29105"/>
        <label>1</label>
    </ligand>
</feature>
<feature type="binding site" evidence="1">
    <location>
        <position position="12"/>
    </location>
    <ligand>
        <name>Zn(2+)</name>
        <dbReference type="ChEBI" id="CHEBI:29105"/>
        <label>1</label>
    </ligand>
</feature>
<feature type="binding site" evidence="1">
    <location>
        <position position="27"/>
    </location>
    <ligand>
        <name>Zn(2+)</name>
        <dbReference type="ChEBI" id="CHEBI:29105"/>
        <label>1</label>
    </ligand>
</feature>
<feature type="binding site" evidence="1">
    <location>
        <position position="30"/>
    </location>
    <ligand>
        <name>Zn(2+)</name>
        <dbReference type="ChEBI" id="CHEBI:29105"/>
        <label>1</label>
    </ligand>
</feature>
<feature type="binding site" evidence="1">
    <location>
        <position position="89"/>
    </location>
    <ligand>
        <name>ATP</name>
        <dbReference type="ChEBI" id="CHEBI:30616"/>
    </ligand>
</feature>
<feature type="binding site" evidence="1">
    <location>
        <begin position="106"/>
        <end position="113"/>
    </location>
    <ligand>
        <name>ATP</name>
        <dbReference type="ChEBI" id="CHEBI:30616"/>
    </ligand>
</feature>
<feature type="binding site" evidence="1">
    <location>
        <position position="646"/>
    </location>
    <ligand>
        <name>Mg(2+)</name>
        <dbReference type="ChEBI" id="CHEBI:18420"/>
        <note>catalytic</note>
    </ligand>
</feature>
<feature type="binding site" evidence="1">
    <location>
        <position position="723"/>
    </location>
    <ligand>
        <name>Zn(2+)</name>
        <dbReference type="ChEBI" id="CHEBI:29105"/>
        <label>2</label>
    </ligand>
</feature>
<feature type="binding site" evidence="1">
    <location>
        <position position="726"/>
    </location>
    <ligand>
        <name>Zn(2+)</name>
        <dbReference type="ChEBI" id="CHEBI:29105"/>
        <label>2</label>
    </ligand>
</feature>
<feature type="binding site" evidence="1">
    <location>
        <position position="739"/>
    </location>
    <ligand>
        <name>Zn(2+)</name>
        <dbReference type="ChEBI" id="CHEBI:29105"/>
        <label>2</label>
    </ligand>
</feature>
<feature type="binding site" evidence="1">
    <location>
        <position position="742"/>
    </location>
    <ligand>
        <name>Zn(2+)</name>
        <dbReference type="ChEBI" id="CHEBI:29105"/>
        <label>2</label>
    </ligand>
</feature>
<feature type="binding site" evidence="1">
    <location>
        <position position="772"/>
    </location>
    <ligand>
        <name>Mg(2+)</name>
        <dbReference type="ChEBI" id="CHEBI:18420"/>
        <note>catalytic</note>
    </ligand>
</feature>
<organism>
    <name type="scientific">Pyrococcus horikoshii (strain ATCC 700860 / DSM 12428 / JCM 9974 / NBRC 100139 / OT-3)</name>
    <dbReference type="NCBI Taxonomy" id="70601"/>
    <lineage>
        <taxon>Archaea</taxon>
        <taxon>Methanobacteriati</taxon>
        <taxon>Methanobacteriota</taxon>
        <taxon>Thermococci</taxon>
        <taxon>Thermococcales</taxon>
        <taxon>Thermococcaceae</taxon>
        <taxon>Pyrococcus</taxon>
    </lineage>
</organism>
<evidence type="ECO:0000255" key="1">
    <source>
        <dbReference type="HAMAP-Rule" id="MF_01125"/>
    </source>
</evidence>
<evidence type="ECO:0000255" key="2">
    <source>
        <dbReference type="PROSITE-ProRule" id="PRU01380"/>
    </source>
</evidence>
<evidence type="ECO:0000255" key="3">
    <source>
        <dbReference type="PROSITE-ProRule" id="PRU01381"/>
    </source>
</evidence>
<evidence type="ECO:0000255" key="4">
    <source>
        <dbReference type="PROSITE-ProRule" id="PRU01383"/>
    </source>
</evidence>
<evidence type="ECO:0000305" key="5"/>